<evidence type="ECO:0000255" key="1"/>
<evidence type="ECO:0000256" key="2">
    <source>
        <dbReference type="SAM" id="MobiDB-lite"/>
    </source>
</evidence>
<evidence type="ECO:0000269" key="3">
    <source>
    </source>
</evidence>
<evidence type="ECO:0000303" key="4">
    <source>
    </source>
</evidence>
<evidence type="ECO:0000305" key="5"/>
<evidence type="ECO:0000305" key="6">
    <source>
    </source>
</evidence>
<evidence type="ECO:0000312" key="7">
    <source>
        <dbReference type="EMBL" id="EAW25088.1"/>
    </source>
</evidence>
<evidence type="ECO:0000312" key="8">
    <source>
        <dbReference type="PDB" id="6D7W"/>
    </source>
</evidence>
<evidence type="ECO:0000312" key="9">
    <source>
        <dbReference type="PDB" id="6D80"/>
    </source>
</evidence>
<evidence type="ECO:0007744" key="10">
    <source>
        <dbReference type="PDB" id="6D7W"/>
    </source>
</evidence>
<evidence type="ECO:0007744" key="11">
    <source>
        <dbReference type="PDB" id="6D80"/>
    </source>
</evidence>
<keyword id="KW-0002">3D-structure</keyword>
<keyword id="KW-0106">Calcium</keyword>
<keyword id="KW-0107">Calcium channel</keyword>
<keyword id="KW-0109">Calcium transport</keyword>
<keyword id="KW-0407">Ion channel</keyword>
<keyword id="KW-0406">Ion transport</keyword>
<keyword id="KW-0472">Membrane</keyword>
<keyword id="KW-0479">Metal-binding</keyword>
<keyword id="KW-0496">Mitochondrion</keyword>
<keyword id="KW-0999">Mitochondrion inner membrane</keyword>
<keyword id="KW-1185">Reference proteome</keyword>
<keyword id="KW-0809">Transit peptide</keyword>
<keyword id="KW-0812">Transmembrane</keyword>
<keyword id="KW-1133">Transmembrane helix</keyword>
<keyword id="KW-0813">Transport</keyword>
<comment type="function">
    <text evidence="3">Highly selective calcium channel localized to the inner mitochondrial membrane, which mediates calcium uptake into the mitochondrial matrix (PubMed:29995855). Mitochondrial calcium homeostasis plays key roles in cellular physiology and regulates ATP production, cytoplasmic calcium signals and activation of cell death pathways (PubMed:29995855). Sufficient to operate as a pore-forming channel without the need of calcium-sensor or auxiliary subunit (PubMed:29995855).</text>
</comment>
<comment type="catalytic activity">
    <reaction evidence="3">
        <text>Ca(2+)(in) = Ca(2+)(out)</text>
        <dbReference type="Rhea" id="RHEA:29671"/>
        <dbReference type="ChEBI" id="CHEBI:29108"/>
    </reaction>
</comment>
<comment type="activity regulation">
    <text evidence="3">Inhibited by ruthenium red or its derivative Ru360.</text>
</comment>
<comment type="subunit">
    <text evidence="3">Homotetramer, assembles in a dimer or dimers configuration with two interfaces.</text>
</comment>
<comment type="subcellular location">
    <subcellularLocation>
        <location evidence="3">Mitochondrion inner membrane</location>
        <topology evidence="3">Multi-pass membrane protein</topology>
    </subcellularLocation>
</comment>
<comment type="domain">
    <text evidence="3">The selectivity filter, in which calcium ions are arranged in single file, is composed of two acidic rings separated by one helical turn along the central axis of the channel pore.</text>
</comment>
<comment type="similarity">
    <text evidence="5">Belongs to the MCU (TC 1.A.77) family.</text>
</comment>
<accession>A1CWT6</accession>
<protein>
    <recommendedName>
        <fullName evidence="5">Calcium uniporter protein, mitochondrial</fullName>
        <shortName evidence="4">NfMCU</shortName>
    </recommendedName>
</protein>
<feature type="transit peptide" description="Mitochondrion" evidence="1">
    <location>
        <begin position="1"/>
        <end position="74"/>
    </location>
</feature>
<feature type="chain" id="PRO_0000460497" description="Calcium uniporter protein, mitochondrial" evidence="1">
    <location>
        <begin position="75"/>
        <end position="488"/>
    </location>
</feature>
<feature type="topological domain" description="Mitochondrial matrix" evidence="6">
    <location>
        <begin position="75"/>
        <end position="339"/>
    </location>
</feature>
<feature type="transmembrane region" description="Helical" evidence="3 8 9">
    <location>
        <begin position="340"/>
        <end position="361"/>
    </location>
</feature>
<feature type="topological domain" description="Mitochondrial intermembrane" evidence="6">
    <location>
        <begin position="362"/>
        <end position="370"/>
    </location>
</feature>
<feature type="transmembrane region" description="Helical" evidence="3 8 9">
    <location>
        <begin position="371"/>
        <end position="391"/>
    </location>
</feature>
<feature type="topological domain" description="Mitochondrial matrix" evidence="6">
    <location>
        <begin position="392"/>
        <end position="488"/>
    </location>
</feature>
<feature type="region of interest" description="Disordered" evidence="2">
    <location>
        <begin position="65"/>
        <end position="117"/>
    </location>
</feature>
<feature type="region of interest" description="Disordered" evidence="2">
    <location>
        <begin position="464"/>
        <end position="488"/>
    </location>
</feature>
<feature type="short sequence motif" description="Selectivity filter" evidence="3">
    <location>
        <begin position="368"/>
        <end position="376"/>
    </location>
</feature>
<feature type="compositionally biased region" description="Basic and acidic residues" evidence="2">
    <location>
        <begin position="86"/>
        <end position="112"/>
    </location>
</feature>
<feature type="compositionally biased region" description="Basic and acidic residues" evidence="2">
    <location>
        <begin position="475"/>
        <end position="488"/>
    </location>
</feature>
<feature type="binding site" evidence="3 10">
    <location>
        <position position="372"/>
    </location>
    <ligand>
        <name>Ca(2+)</name>
        <dbReference type="ChEBI" id="CHEBI:29108"/>
    </ligand>
</feature>
<feature type="mutagenesis site" description="Abolished calcium channel activity." evidence="3">
    <original>W</original>
    <variation>A</variation>
    <location>
        <position position="368"/>
    </location>
</feature>
<feature type="mutagenesis site" description="Increased calcium channel activity. Abolished inhibition by ruthenium red derivative Ru360." evidence="3">
    <original>D</original>
    <variation>E</variation>
    <location>
        <position position="369"/>
    </location>
</feature>
<feature type="mutagenesis site" description="Slightly reduced calcium channel activity. Decreased inhibition by ruthenium red derivative Ru360." evidence="3">
    <original>D</original>
    <variation>N</variation>
    <location>
        <position position="369"/>
    </location>
</feature>
<feature type="mutagenesis site" description="Abolished calcium channel activity." evidence="3">
    <original>E</original>
    <variation>Q</variation>
    <variation>D</variation>
    <location>
        <position position="372"/>
    </location>
</feature>
<feature type="mutagenesis site" description="Abolished calcium channel activity." evidence="3">
    <original>P</original>
    <variation>A</variation>
    <location>
        <position position="373"/>
    </location>
</feature>
<gene>
    <name evidence="4" type="primary">mcu</name>
    <name evidence="7" type="ORF">NFIA_105760</name>
</gene>
<dbReference type="EMBL" id="DS027685">
    <property type="protein sequence ID" value="EAW25088.1"/>
    <property type="molecule type" value="Genomic_DNA"/>
</dbReference>
<dbReference type="RefSeq" id="XP_001266985.1">
    <property type="nucleotide sequence ID" value="XM_001266984.1"/>
</dbReference>
<dbReference type="PDB" id="6D7W">
    <property type="method" value="EM"/>
    <property type="resolution" value="3.80 A"/>
    <property type="chains" value="A/B/C/D=75-488"/>
</dbReference>
<dbReference type="PDB" id="6D80">
    <property type="method" value="EM"/>
    <property type="resolution" value="5.00 A"/>
    <property type="chains" value="A/B/C/D=75-488"/>
</dbReference>
<dbReference type="PDBsum" id="6D7W"/>
<dbReference type="PDBsum" id="6D80"/>
<dbReference type="EMDB" id="EMD-7826"/>
<dbReference type="EMDB" id="EMD-7828"/>
<dbReference type="SMR" id="A1CWT6"/>
<dbReference type="STRING" id="331117.A1CWT6"/>
<dbReference type="TCDB" id="1.A.77.1.15">
    <property type="family name" value="the mg(2+)/ca(2+) uniporter (mcu) family"/>
</dbReference>
<dbReference type="EnsemblFungi" id="EAW25088">
    <property type="protein sequence ID" value="EAW25088"/>
    <property type="gene ID" value="NFIA_105760"/>
</dbReference>
<dbReference type="GeneID" id="4593770"/>
<dbReference type="KEGG" id="nfi:NFIA_105760"/>
<dbReference type="VEuPathDB" id="FungiDB:NFIA_105760"/>
<dbReference type="eggNOG" id="KOG2966">
    <property type="taxonomic scope" value="Eukaryota"/>
</dbReference>
<dbReference type="HOGENOM" id="CLU_035826_1_0_1"/>
<dbReference type="OMA" id="IKHECDA"/>
<dbReference type="OrthoDB" id="278338at2759"/>
<dbReference type="Proteomes" id="UP000006702">
    <property type="component" value="Unassembled WGS sequence"/>
</dbReference>
<dbReference type="GO" id="GO:0005743">
    <property type="term" value="C:mitochondrial inner membrane"/>
    <property type="evidence" value="ECO:0000314"/>
    <property type="project" value="UniProtKB"/>
</dbReference>
<dbReference type="GO" id="GO:1990246">
    <property type="term" value="C:uniplex complex"/>
    <property type="evidence" value="ECO:0007669"/>
    <property type="project" value="TreeGrafter"/>
</dbReference>
<dbReference type="GO" id="GO:0005262">
    <property type="term" value="F:calcium channel activity"/>
    <property type="evidence" value="ECO:0000314"/>
    <property type="project" value="UniProtKB"/>
</dbReference>
<dbReference type="GO" id="GO:0046872">
    <property type="term" value="F:metal ion binding"/>
    <property type="evidence" value="ECO:0007669"/>
    <property type="project" value="UniProtKB-KW"/>
</dbReference>
<dbReference type="GO" id="GO:0015292">
    <property type="term" value="F:uniporter activity"/>
    <property type="evidence" value="ECO:0007669"/>
    <property type="project" value="TreeGrafter"/>
</dbReference>
<dbReference type="GO" id="GO:0036444">
    <property type="term" value="P:calcium import into the mitochondrion"/>
    <property type="evidence" value="ECO:0000314"/>
    <property type="project" value="UniProtKB"/>
</dbReference>
<dbReference type="GO" id="GO:0051560">
    <property type="term" value="P:mitochondrial calcium ion homeostasis"/>
    <property type="evidence" value="ECO:0007669"/>
    <property type="project" value="InterPro"/>
</dbReference>
<dbReference type="GO" id="GO:0051289">
    <property type="term" value="P:protein homotetramerization"/>
    <property type="evidence" value="ECO:0000314"/>
    <property type="project" value="UniProtKB"/>
</dbReference>
<dbReference type="InterPro" id="IPR006769">
    <property type="entry name" value="MCU_C"/>
</dbReference>
<dbReference type="InterPro" id="IPR039055">
    <property type="entry name" value="MCU_fam"/>
</dbReference>
<dbReference type="PANTHER" id="PTHR13462">
    <property type="entry name" value="CALCIUM UNIPORTER PROTEIN, MITOCHONDRIAL"/>
    <property type="match status" value="1"/>
</dbReference>
<dbReference type="PANTHER" id="PTHR13462:SF10">
    <property type="entry name" value="CALCIUM UNIPORTER PROTEIN, MITOCHONDRIAL"/>
    <property type="match status" value="1"/>
</dbReference>
<dbReference type="Pfam" id="PF04678">
    <property type="entry name" value="MCU"/>
    <property type="match status" value="1"/>
</dbReference>
<organism>
    <name type="scientific">Neosartorya fischeri (strain ATCC 1020 / DSM 3700 / CBS 544.65 / FGSC A1164 / JCM 1740 / NRRL 181 / WB 181)</name>
    <name type="common">Aspergillus fischerianus</name>
    <dbReference type="NCBI Taxonomy" id="331117"/>
    <lineage>
        <taxon>Eukaryota</taxon>
        <taxon>Fungi</taxon>
        <taxon>Dikarya</taxon>
        <taxon>Ascomycota</taxon>
        <taxon>Pezizomycotina</taxon>
        <taxon>Eurotiomycetes</taxon>
        <taxon>Eurotiomycetidae</taxon>
        <taxon>Eurotiales</taxon>
        <taxon>Aspergillaceae</taxon>
        <taxon>Aspergillus</taxon>
        <taxon>Aspergillus subgen. Fumigati</taxon>
    </lineage>
</organism>
<name>MCU_NEOFI</name>
<sequence>MRALVSRTPIAAALRSATLGSQCASIQYNSLNILDRLPQPLPSRSFRIRYTGVSTSGRVTQTCRRSFQLSASSRDKRGPQSAEPDPLERLEVKKVQQQHENEKDDSGRDTKSGGKVAKAMTKGDTIAGKLLTTPSRLFKLLIPLTTINRKDIEQIAILIHPQQPLSHLERLIQSEVPPIEDENGQKRPPAVSFIALQLEQDAIRPKRGMYEGTDAEIHRVEGGKDDATVAKRGEDFQEVDETFSYLRRPGPGQGDKEQRFIRWSQSTEIGDFIRDAARAKEFIVTIEGAPAGLEQIHVAVPSFDERTYFLRMRLRKISRRIQGLAEIKHECDALAHRGAQRVALGGFGILAFWWYIVYKLTFETDLGWDTMEPVTYLVSLSTLMGGYLWFLYHNREISYRSALDFTINARQKKLYQMKGIDLQVWESLIDEANAIRREIKNIAAEYDVDWDERKDEQDDRVTEALKKERRLKNGSQKEERPKDDRDDD</sequence>
<reference key="1">
    <citation type="journal article" date="2008" name="PLoS Genet.">
        <title>Genomic islands in the pathogenic filamentous fungus Aspergillus fumigatus.</title>
        <authorList>
            <person name="Fedorova N.D."/>
            <person name="Khaldi N."/>
            <person name="Joardar V.S."/>
            <person name="Maiti R."/>
            <person name="Amedeo P."/>
            <person name="Anderson M.J."/>
            <person name="Crabtree J."/>
            <person name="Silva J.C."/>
            <person name="Badger J.H."/>
            <person name="Albarraq A."/>
            <person name="Angiuoli S."/>
            <person name="Bussey H."/>
            <person name="Bowyer P."/>
            <person name="Cotty P.J."/>
            <person name="Dyer P.S."/>
            <person name="Egan A."/>
            <person name="Galens K."/>
            <person name="Fraser-Liggett C.M."/>
            <person name="Haas B.J."/>
            <person name="Inman J.M."/>
            <person name="Kent R."/>
            <person name="Lemieux S."/>
            <person name="Malavazi I."/>
            <person name="Orvis J."/>
            <person name="Roemer T."/>
            <person name="Ronning C.M."/>
            <person name="Sundaram J.P."/>
            <person name="Sutton G."/>
            <person name="Turner G."/>
            <person name="Venter J.C."/>
            <person name="White O.R."/>
            <person name="Whitty B.R."/>
            <person name="Youngman P."/>
            <person name="Wolfe K.H."/>
            <person name="Goldman G.H."/>
            <person name="Wortman J.R."/>
            <person name="Jiang B."/>
            <person name="Denning D.W."/>
            <person name="Nierman W.C."/>
        </authorList>
    </citation>
    <scope>NUCLEOTIDE SEQUENCE [LARGE SCALE GENOMIC DNA]</scope>
    <source>
        <strain>ATCC 1020 / DSM 3700 / CBS 544.65 / FGSC A1164 / JCM 1740 / NRRL 181 / WB 181</strain>
    </source>
</reference>
<reference evidence="10 11" key="2">
    <citation type="journal article" date="2018" name="Nature">
        <title>Cryo-EM structure of a fungal mitochondrial calcium uniporter.</title>
        <authorList>
            <person name="Nguyen N.X."/>
            <person name="Armache J.P."/>
            <person name="Lee C."/>
            <person name="Yang Y."/>
            <person name="Zeng W."/>
            <person name="Mootha V.K."/>
            <person name="Cheng Y."/>
            <person name="Bai X.C."/>
            <person name="Jiang Y."/>
        </authorList>
    </citation>
    <scope>STRUCTURE BY ELECTRON MICROSCOPY (5.00 ANGSTROMS) OF 75-488 IN COMPLEX WITH CALCIUM</scope>
    <scope>FUNCTION</scope>
    <scope>TRANSPORTER ACTIVITY</scope>
    <scope>ACTIVITY REGULATION</scope>
    <scope>SUBUNIT</scope>
    <scope>SUBCELLULAR LOCATION</scope>
    <scope>DOMAIN</scope>
    <scope>MUTAGENESIS OF TRP-368; ASP-369; GLU-372 AND PRO-373</scope>
</reference>
<proteinExistence type="evidence at protein level"/>